<comment type="subcellular location">
    <subcellularLocation>
        <location evidence="2">Nucleus</location>
    </subcellularLocation>
</comment>
<comment type="similarity">
    <text evidence="2">Belongs to the BUD31 (G10) family.</text>
</comment>
<proteinExistence type="evidence at transcript level"/>
<accession>Q962X9</accession>
<name>BUD31_BRABE</name>
<reference key="1">
    <citation type="submission" date="2001-06" db="EMBL/GenBank/DDBJ databases">
        <title>Cloning of G10 gene in amphioxus.</title>
        <authorList>
            <person name="Chen Z."/>
            <person name="Zhang H."/>
            <person name="Yang H."/>
        </authorList>
    </citation>
    <scope>NUCLEOTIDE SEQUENCE [MRNA]</scope>
</reference>
<feature type="chain" id="PRO_0000249855" description="Protein BUD31 homolog">
    <location>
        <begin position="1"/>
        <end position="144"/>
    </location>
</feature>
<feature type="short sequence motif" description="Nuclear localization signal" evidence="1">
    <location>
        <begin position="2"/>
        <end position="10"/>
    </location>
</feature>
<evidence type="ECO:0000255" key="1"/>
<evidence type="ECO:0000305" key="2"/>
<dbReference type="EMBL" id="AF395865">
    <property type="protein sequence ID" value="AAK81863.1"/>
    <property type="molecule type" value="mRNA"/>
</dbReference>
<dbReference type="RefSeq" id="XP_019616755.1">
    <property type="nucleotide sequence ID" value="XM_019761196.1"/>
</dbReference>
<dbReference type="SMR" id="Q962X9"/>
<dbReference type="GeneID" id="109464260"/>
<dbReference type="KEGG" id="bbel:109464260"/>
<dbReference type="OrthoDB" id="277109at2759"/>
<dbReference type="Proteomes" id="UP000515135">
    <property type="component" value="Unplaced"/>
</dbReference>
<dbReference type="GO" id="GO:0005681">
    <property type="term" value="C:spliceosomal complex"/>
    <property type="evidence" value="ECO:0007669"/>
    <property type="project" value="TreeGrafter"/>
</dbReference>
<dbReference type="GO" id="GO:0000398">
    <property type="term" value="P:mRNA splicing, via spliceosome"/>
    <property type="evidence" value="ECO:0007669"/>
    <property type="project" value="TreeGrafter"/>
</dbReference>
<dbReference type="InterPro" id="IPR001748">
    <property type="entry name" value="BUD31"/>
</dbReference>
<dbReference type="InterPro" id="IPR018230">
    <property type="entry name" value="BUD31/G10-rel_CS"/>
</dbReference>
<dbReference type="PANTHER" id="PTHR19411:SF0">
    <property type="entry name" value="PROTEIN BUD31 HOMOLOG"/>
    <property type="match status" value="1"/>
</dbReference>
<dbReference type="PANTHER" id="PTHR19411">
    <property type="entry name" value="PROTEIN BUD31-RELATED"/>
    <property type="match status" value="1"/>
</dbReference>
<dbReference type="Pfam" id="PF01125">
    <property type="entry name" value="BUD31"/>
    <property type="match status" value="1"/>
</dbReference>
<dbReference type="PRINTS" id="PR00322">
    <property type="entry name" value="G10"/>
</dbReference>
<dbReference type="PROSITE" id="PS00997">
    <property type="entry name" value="G10_1"/>
    <property type="match status" value="1"/>
</dbReference>
<dbReference type="PROSITE" id="PS00998">
    <property type="entry name" value="G10_2"/>
    <property type="match status" value="1"/>
</dbReference>
<protein>
    <recommendedName>
        <fullName>Protein BUD31 homolog</fullName>
    </recommendedName>
    <alternativeName>
        <fullName>Protein G10 homolog</fullName>
    </alternativeName>
</protein>
<sequence>MPKVRRSRKPPPEGWELIEPTLDELDQKMREAETEPHEGKRKVEALWPIFKIHHQKSRYIFDLFYRRKAISRELYEYCLKEGIADKNLIAKWKKQGYENLCCLRCIQTRDTNFGTNCICRVPKSKLEEGRIVECVHCGCRGCSG</sequence>
<organism>
    <name type="scientific">Branchiostoma belcheri</name>
    <name type="common">Amphioxus</name>
    <dbReference type="NCBI Taxonomy" id="7741"/>
    <lineage>
        <taxon>Eukaryota</taxon>
        <taxon>Metazoa</taxon>
        <taxon>Chordata</taxon>
        <taxon>Cephalochordata</taxon>
        <taxon>Leptocardii</taxon>
        <taxon>Amphioxiformes</taxon>
        <taxon>Branchiostomatidae</taxon>
        <taxon>Branchiostoma</taxon>
    </lineage>
</organism>
<keyword id="KW-0539">Nucleus</keyword>
<keyword id="KW-1185">Reference proteome</keyword>